<reference key="1">
    <citation type="journal article" date="2005" name="Nature">
        <title>The map-based sequence of the rice genome.</title>
        <authorList>
            <consortium name="International rice genome sequencing project (IRGSP)"/>
        </authorList>
    </citation>
    <scope>NUCLEOTIDE SEQUENCE [LARGE SCALE GENOMIC DNA]</scope>
    <source>
        <strain>cv. Nipponbare</strain>
    </source>
</reference>
<reference key="2">
    <citation type="journal article" date="2008" name="Nucleic Acids Res.">
        <title>The rice annotation project database (RAP-DB): 2008 update.</title>
        <authorList>
            <consortium name="The rice annotation project (RAP)"/>
        </authorList>
    </citation>
    <scope>GENOME REANNOTATION</scope>
    <source>
        <strain>cv. Nipponbare</strain>
    </source>
</reference>
<reference key="3">
    <citation type="journal article" date="2013" name="Rice">
        <title>Improvement of the Oryza sativa Nipponbare reference genome using next generation sequence and optical map data.</title>
        <authorList>
            <person name="Kawahara Y."/>
            <person name="de la Bastide M."/>
            <person name="Hamilton J.P."/>
            <person name="Kanamori H."/>
            <person name="McCombie W.R."/>
            <person name="Ouyang S."/>
            <person name="Schwartz D.C."/>
            <person name="Tanaka T."/>
            <person name="Wu J."/>
            <person name="Zhou S."/>
            <person name="Childs K.L."/>
            <person name="Davidson R.M."/>
            <person name="Lin H."/>
            <person name="Quesada-Ocampo L."/>
            <person name="Vaillancourt B."/>
            <person name="Sakai H."/>
            <person name="Lee S.S."/>
            <person name="Kim J."/>
            <person name="Numa H."/>
            <person name="Itoh T."/>
            <person name="Buell C.R."/>
            <person name="Matsumoto T."/>
        </authorList>
    </citation>
    <scope>GENOME REANNOTATION</scope>
    <source>
        <strain>cv. Nipponbare</strain>
    </source>
</reference>
<reference key="4">
    <citation type="journal article" date="2003" name="Science">
        <title>Collection, mapping, and annotation of over 28,000 cDNA clones from japonica rice.</title>
        <authorList>
            <consortium name="The rice full-length cDNA consortium"/>
        </authorList>
    </citation>
    <scope>NUCLEOTIDE SEQUENCE [LARGE SCALE MRNA]</scope>
    <source>
        <strain>cv. Nipponbare</strain>
    </source>
</reference>
<reference key="5">
    <citation type="journal article" date="2010" name="Plant Sci.">
        <title>Identification and expression analysis of PIN genes in rice.</title>
        <authorList>
            <person name="Miyashita Y."/>
            <person name="Takasugi T."/>
            <person name="Ito Y."/>
        </authorList>
    </citation>
    <scope>IDENTIFICATION</scope>
    <scope>TISSUE SPECIFICITY</scope>
</reference>
<reference key="6">
    <citation type="journal article" date="2005" name="Plant Cell Physiol.">
        <title>A PIN1 family gene, OsPIN1, involved in auxin-dependent adventitious root emergence and tillering in rice.</title>
        <authorList>
            <person name="Xu M."/>
            <person name="Zhu L."/>
            <person name="Shou H."/>
            <person name="Wu P."/>
        </authorList>
    </citation>
    <scope>NOMENCLATURE</scope>
</reference>
<reference key="7">
    <citation type="journal article" date="2009" name="Mol. Plant">
        <title>Expression of PIN genes in rice (Oryza sativa L.): tissue specificity and regulation by hormones.</title>
        <authorList>
            <person name="Wang J.R."/>
            <person name="Hu H."/>
            <person name="Wang G.H."/>
            <person name="Li J."/>
            <person name="Chen J.Y."/>
            <person name="Wu P."/>
        </authorList>
    </citation>
    <scope>TISSUE SPECIFICITY</scope>
</reference>
<reference key="8">
    <citation type="journal article" date="2012" name="Plant Biotechnol. J.">
        <title>Over-expression of OsPIN2 leads to increased tiller numbers, angle and shorter plant height through suppression of OsLAZY1.</title>
        <authorList>
            <person name="Chen Y."/>
            <person name="Fan X."/>
            <person name="Song W."/>
            <person name="Zhang Y."/>
            <person name="Xu G."/>
        </authorList>
    </citation>
    <scope>FUNCTION</scope>
</reference>
<protein>
    <recommendedName>
        <fullName evidence="9">Auxin efflux carrier component 2</fullName>
        <shortName evidence="8">OsPIN2</shortName>
    </recommendedName>
</protein>
<name>PIN2_ORYSJ</name>
<gene>
    <name evidence="8" type="primary">PIN2</name>
    <name evidence="11" type="ordered locus">Os06g0660200</name>
    <name evidence="9" type="ordered locus">LOC_Os06g44970</name>
    <name evidence="10" type="ORF">OSJNBa0051O02.21</name>
</gene>
<dbReference type="EMBL" id="AP005769">
    <property type="protein sequence ID" value="BAD46411.1"/>
    <property type="molecule type" value="Genomic_DNA"/>
</dbReference>
<dbReference type="EMBL" id="AP008212">
    <property type="protein sequence ID" value="BAF20182.1"/>
    <property type="molecule type" value="Genomic_DNA"/>
</dbReference>
<dbReference type="EMBL" id="AP014962">
    <property type="protein sequence ID" value="BAS98970.1"/>
    <property type="molecule type" value="Genomic_DNA"/>
</dbReference>
<dbReference type="EMBL" id="AK101191">
    <property type="protein sequence ID" value="BAG94949.1"/>
    <property type="molecule type" value="mRNA"/>
</dbReference>
<dbReference type="EMBL" id="BR000831">
    <property type="protein sequence ID" value="FAA00680.1"/>
    <property type="molecule type" value="Genomic_DNA"/>
</dbReference>
<dbReference type="RefSeq" id="XP_015641653.1">
    <property type="nucleotide sequence ID" value="XM_015786167.1"/>
</dbReference>
<dbReference type="SMR" id="Q651V6"/>
<dbReference type="FunCoup" id="Q651V6">
    <property type="interactions" value="30"/>
</dbReference>
<dbReference type="STRING" id="39947.Q651V6"/>
<dbReference type="GlyCosmos" id="Q651V6">
    <property type="glycosylation" value="1 site, No reported glycans"/>
</dbReference>
<dbReference type="PaxDb" id="39947-Q651V6"/>
<dbReference type="EnsemblPlants" id="Os06t0660200-01">
    <property type="protein sequence ID" value="Os06t0660200-01"/>
    <property type="gene ID" value="Os06g0660200"/>
</dbReference>
<dbReference type="Gramene" id="Os06t0660200-01">
    <property type="protein sequence ID" value="Os06t0660200-01"/>
    <property type="gene ID" value="Os06g0660200"/>
</dbReference>
<dbReference type="KEGG" id="dosa:Os06g0660200"/>
<dbReference type="eggNOG" id="ENOG502QV64">
    <property type="taxonomic scope" value="Eukaryota"/>
</dbReference>
<dbReference type="HOGENOM" id="CLU_019285_1_1_1"/>
<dbReference type="InParanoid" id="Q651V6"/>
<dbReference type="OMA" id="MSPGRKM"/>
<dbReference type="OrthoDB" id="1868374at2759"/>
<dbReference type="PlantReactome" id="R-OSA-8858053">
    <property type="pathway name" value="Polar auxin transport"/>
</dbReference>
<dbReference type="PlantReactome" id="R-OSA-9639861">
    <property type="pathway name" value="Development of root hair"/>
</dbReference>
<dbReference type="PlantReactome" id="R-OSA-9675508">
    <property type="pathway name" value="Root elongation"/>
</dbReference>
<dbReference type="Proteomes" id="UP000000763">
    <property type="component" value="Chromosome 6"/>
</dbReference>
<dbReference type="Proteomes" id="UP000059680">
    <property type="component" value="Chromosome 6"/>
</dbReference>
<dbReference type="GO" id="GO:0009921">
    <property type="term" value="C:auxin efflux carrier complex"/>
    <property type="evidence" value="ECO:0000314"/>
    <property type="project" value="UniProtKB"/>
</dbReference>
<dbReference type="GO" id="GO:0005783">
    <property type="term" value="C:endoplasmic reticulum"/>
    <property type="evidence" value="ECO:0000318"/>
    <property type="project" value="GO_Central"/>
</dbReference>
<dbReference type="GO" id="GO:0005886">
    <property type="term" value="C:plasma membrane"/>
    <property type="evidence" value="ECO:0000318"/>
    <property type="project" value="GO_Central"/>
</dbReference>
<dbReference type="GO" id="GO:0010329">
    <property type="term" value="F:auxin efflux transmembrane transporter activity"/>
    <property type="evidence" value="ECO:0000250"/>
    <property type="project" value="UniProtKB"/>
</dbReference>
<dbReference type="GO" id="GO:0042802">
    <property type="term" value="F:identical protein binding"/>
    <property type="evidence" value="ECO:0000250"/>
    <property type="project" value="UniProtKB"/>
</dbReference>
<dbReference type="GO" id="GO:0042803">
    <property type="term" value="F:protein homodimerization activity"/>
    <property type="evidence" value="ECO:0000250"/>
    <property type="project" value="UniProtKB"/>
</dbReference>
<dbReference type="GO" id="GO:0010315">
    <property type="term" value="P:auxin export across the plasma membrane"/>
    <property type="evidence" value="ECO:0000250"/>
    <property type="project" value="UniProtKB"/>
</dbReference>
<dbReference type="GO" id="GO:0009926">
    <property type="term" value="P:auxin polar transport"/>
    <property type="evidence" value="ECO:0000315"/>
    <property type="project" value="UniProtKB"/>
</dbReference>
<dbReference type="GO" id="GO:0009734">
    <property type="term" value="P:auxin-activated signaling pathway"/>
    <property type="evidence" value="ECO:0007669"/>
    <property type="project" value="UniProtKB-KW"/>
</dbReference>
<dbReference type="InterPro" id="IPR014024">
    <property type="entry name" value="Auxin_eff_plant"/>
</dbReference>
<dbReference type="InterPro" id="IPR051107">
    <property type="entry name" value="Auxin_Efflux_Carrier"/>
</dbReference>
<dbReference type="InterPro" id="IPR004776">
    <property type="entry name" value="Mem_transp_PIN-like"/>
</dbReference>
<dbReference type="NCBIfam" id="TIGR00946">
    <property type="entry name" value="2a69"/>
    <property type="match status" value="1"/>
</dbReference>
<dbReference type="PANTHER" id="PTHR31752">
    <property type="entry name" value="AUXIN EFFLUX CARRIER COMPONENT 1B-RELATED"/>
    <property type="match status" value="1"/>
</dbReference>
<dbReference type="PANTHER" id="PTHR31752:SF4">
    <property type="entry name" value="AUXIN EFFLUX CARRIER COMPONENT 2"/>
    <property type="match status" value="1"/>
</dbReference>
<dbReference type="Pfam" id="PF03547">
    <property type="entry name" value="Mem_trans"/>
    <property type="match status" value="1"/>
</dbReference>
<sequence>MITGRDIYDVLAAIVPLYVAMFLAYGSVRWWGIFTPDQCSGINRFVAVFAVPLLSFHFISTNDPYSMNYRFLAADSLQKLVILAALAVWHNLLSRYRRNGGAAASLDWTITLFSLSTLPNTLVMGIPLLRAMYGDFSGSLMVQIVVLQSVIWYTLMLFLFEYRGAKALISEQFPPDVGASIASFRVDSDVVSLNGREALQADAEVGRDGRVHVVIRRSASASTTGGGGGAARSGVSRAYGASNAMTPRASNLTGVEIYSLQTSREPTPRASSFNQADFYAMFSGSKMASQMASPMAQHGGAGGRAQGLDEQVTNKFASGKAADPPSYPAPNPGMMPAPRKKELGGSNSNSNKELHMFVWSSSASPVSEANLRNAVNHAASTDFASAPPPAAVPVGGATPKGVSGSVTPAAKNGGGELEIEDGLKSPAAGLAAKFPVSGSPYVAPRKKGGGADVPGLAEAAHPMPPTSVMTRLILIMVWRKLIRNPNTYSSLIGLVWSLVSFRWNIQMPSIIKGSISILSDAGLGMAMFSLGLFMALQPKIISCGKTVATFAMAVRFLTGPAVIAATSIAIGLRGVLLHVAIVQAALPQGIVPFVFAKEYNCHPQILSTAVIFGMLIALPITILYYVLLGI</sequence>
<comment type="function">
    <text evidence="6">Acts as a component of the auxin efflux carrier. Involved in the basipetal polar auxin transport which contributes to the spreading growth of the tillers.</text>
</comment>
<comment type="subunit">
    <text evidence="1">Homodimer.</text>
</comment>
<comment type="subcellular location">
    <subcellularLocation>
        <location evidence="3">Membrane</location>
        <topology evidence="3">Multi-pass membrane protein</topology>
    </subcellularLocation>
</comment>
<comment type="tissue specificity">
    <text evidence="5 7">Expressed in roots, leaves, shoot apex and panicles (Ref.5). Expressed in roots, stem bases and young panicles (PubMed:19825657).</text>
</comment>
<comment type="miscellaneous">
    <text evidence="6">Plants over-expressing PIN2 exhibit reduced height, increased tiller number and enlarged tiller angle.</text>
</comment>
<comment type="similarity">
    <text evidence="9">Belongs to the auxin efflux carrier (TC 2.A.69.1) family.</text>
</comment>
<organism>
    <name type="scientific">Oryza sativa subsp. japonica</name>
    <name type="common">Rice</name>
    <dbReference type="NCBI Taxonomy" id="39947"/>
    <lineage>
        <taxon>Eukaryota</taxon>
        <taxon>Viridiplantae</taxon>
        <taxon>Streptophyta</taxon>
        <taxon>Embryophyta</taxon>
        <taxon>Tracheophyta</taxon>
        <taxon>Spermatophyta</taxon>
        <taxon>Magnoliopsida</taxon>
        <taxon>Liliopsida</taxon>
        <taxon>Poales</taxon>
        <taxon>Poaceae</taxon>
        <taxon>BOP clade</taxon>
        <taxon>Oryzoideae</taxon>
        <taxon>Oryzeae</taxon>
        <taxon>Oryzinae</taxon>
        <taxon>Oryza</taxon>
        <taxon>Oryza sativa</taxon>
    </lineage>
</organism>
<keyword id="KW-0927">Auxin signaling pathway</keyword>
<keyword id="KW-0472">Membrane</keyword>
<keyword id="KW-1185">Reference proteome</keyword>
<keyword id="KW-0812">Transmembrane</keyword>
<keyword id="KW-1133">Transmembrane helix</keyword>
<keyword id="KW-0813">Transport</keyword>
<accession>Q651V6</accession>
<accession>Q0DAE1</accession>
<feature type="chain" id="PRO_0000123791" description="Auxin efflux carrier component 2">
    <location>
        <begin position="1"/>
        <end position="630"/>
    </location>
</feature>
<feature type="topological domain" description="Extracellular" evidence="9">
    <location>
        <begin position="1"/>
        <end position="6"/>
    </location>
</feature>
<feature type="transmembrane region" description="Helical; Name=1" evidence="3">
    <location>
        <begin position="7"/>
        <end position="27"/>
    </location>
</feature>
<feature type="topological domain" description="Cytoplasmic" evidence="9">
    <location>
        <begin position="28"/>
        <end position="38"/>
    </location>
</feature>
<feature type="transmembrane region" description="Helical; Name=2" evidence="3">
    <location>
        <begin position="39"/>
        <end position="59"/>
    </location>
</feature>
<feature type="topological domain" description="Extracellular" evidence="9">
    <location>
        <begin position="60"/>
        <end position="70"/>
    </location>
</feature>
<feature type="transmembrane region" description="Helical; Name=3" evidence="3">
    <location>
        <begin position="71"/>
        <end position="91"/>
    </location>
</feature>
<feature type="topological domain" description="Cytoplasmic" evidence="9">
    <location>
        <begin position="92"/>
        <end position="108"/>
    </location>
</feature>
<feature type="transmembrane region" description="Helical; Name=4" evidence="3">
    <location>
        <begin position="109"/>
        <end position="129"/>
    </location>
</feature>
<feature type="topological domain" description="Extracellular" evidence="9">
    <location>
        <begin position="130"/>
        <end position="139"/>
    </location>
</feature>
<feature type="transmembrane region" description="Helical; Name=5" evidence="3">
    <location>
        <begin position="140"/>
        <end position="160"/>
    </location>
</feature>
<feature type="topological domain" description="Cytoplasmic" evidence="9">
    <location>
        <begin position="161"/>
        <end position="490"/>
    </location>
</feature>
<feature type="transmembrane region" description="Helical; Name=6" evidence="3">
    <location>
        <begin position="491"/>
        <end position="511"/>
    </location>
</feature>
<feature type="topological domain" description="Extracellular" evidence="9">
    <location>
        <begin position="512"/>
        <end position="514"/>
    </location>
</feature>
<feature type="transmembrane region" description="Helical; Name=7" evidence="3">
    <location>
        <begin position="515"/>
        <end position="535"/>
    </location>
</feature>
<feature type="topological domain" description="Cytoplasmic" evidence="9">
    <location>
        <begin position="536"/>
        <end position="549"/>
    </location>
</feature>
<feature type="transmembrane region" description="Helical; Name=8" evidence="3">
    <location>
        <begin position="550"/>
        <end position="570"/>
    </location>
</feature>
<feature type="topological domain" description="Extracellular" evidence="9">
    <location>
        <begin position="571"/>
        <end position="574"/>
    </location>
</feature>
<feature type="transmembrane region" description="Helical; Name=9" evidence="3">
    <location>
        <begin position="575"/>
        <end position="595"/>
    </location>
</feature>
<feature type="topological domain" description="Cytoplasmic" evidence="9">
    <location>
        <begin position="596"/>
        <end position="609"/>
    </location>
</feature>
<feature type="transmembrane region" description="Helical; Name=10" evidence="3">
    <location>
        <begin position="610"/>
        <end position="630"/>
    </location>
</feature>
<feature type="region of interest" description="Disordered" evidence="4">
    <location>
        <begin position="317"/>
        <end position="350"/>
    </location>
</feature>
<feature type="compositionally biased region" description="Pro residues" evidence="4">
    <location>
        <begin position="325"/>
        <end position="335"/>
    </location>
</feature>
<feature type="binding site" evidence="2">
    <location>
        <position position="51"/>
    </location>
    <ligand>
        <name>(indol-3-yl)acetate</name>
        <dbReference type="ChEBI" id="CHEBI:30854"/>
    </ligand>
</feature>
<feature type="binding site" evidence="2">
    <location>
        <position position="120"/>
    </location>
    <ligand>
        <name>(indol-3-yl)acetate</name>
        <dbReference type="ChEBI" id="CHEBI:30854"/>
    </ligand>
</feature>
<feature type="binding site" evidence="2">
    <location>
        <position position="122"/>
    </location>
    <ligand>
        <name>(indol-3-yl)acetate</name>
        <dbReference type="ChEBI" id="CHEBI:30854"/>
    </ligand>
</feature>
<feature type="binding site" evidence="2">
    <location>
        <position position="153"/>
    </location>
    <ligand>
        <name>(indol-3-yl)acetate</name>
        <dbReference type="ChEBI" id="CHEBI:30854"/>
    </ligand>
</feature>
<feature type="binding site" evidence="2">
    <location>
        <position position="590"/>
    </location>
    <ligand>
        <name>(indol-3-yl)acetate</name>
        <dbReference type="ChEBI" id="CHEBI:30854"/>
    </ligand>
</feature>
<feature type="binding site" evidence="2">
    <location>
        <position position="591"/>
    </location>
    <ligand>
        <name>(indol-3-yl)acetate</name>
        <dbReference type="ChEBI" id="CHEBI:30854"/>
    </ligand>
</feature>
<proteinExistence type="evidence at transcript level"/>
<evidence type="ECO:0000250" key="1">
    <source>
        <dbReference type="UniProtKB" id="Q9C6B8"/>
    </source>
</evidence>
<evidence type="ECO:0000250" key="2">
    <source>
        <dbReference type="UniProtKB" id="Q9LFP6"/>
    </source>
</evidence>
<evidence type="ECO:0000255" key="3"/>
<evidence type="ECO:0000256" key="4">
    <source>
        <dbReference type="SAM" id="MobiDB-lite"/>
    </source>
</evidence>
<evidence type="ECO:0000269" key="5">
    <source>
    </source>
</evidence>
<evidence type="ECO:0000269" key="6">
    <source>
    </source>
</evidence>
<evidence type="ECO:0000269" key="7">
    <source ref="5"/>
</evidence>
<evidence type="ECO:0000303" key="8">
    <source>
    </source>
</evidence>
<evidence type="ECO:0000305" key="9"/>
<evidence type="ECO:0000312" key="10">
    <source>
        <dbReference type="EMBL" id="BAD46411.1"/>
    </source>
</evidence>
<evidence type="ECO:0000312" key="11">
    <source>
        <dbReference type="EMBL" id="BAS98970.1"/>
    </source>
</evidence>